<reference key="1">
    <citation type="journal article" date="1999" name="Nature">
        <title>Sequence and analysis of chromosome 2 of the plant Arabidopsis thaliana.</title>
        <authorList>
            <person name="Lin X."/>
            <person name="Kaul S."/>
            <person name="Rounsley S.D."/>
            <person name="Shea T.P."/>
            <person name="Benito M.-I."/>
            <person name="Town C.D."/>
            <person name="Fujii C.Y."/>
            <person name="Mason T.M."/>
            <person name="Bowman C.L."/>
            <person name="Barnstead M.E."/>
            <person name="Feldblyum T.V."/>
            <person name="Buell C.R."/>
            <person name="Ketchum K.A."/>
            <person name="Lee J.J."/>
            <person name="Ronning C.M."/>
            <person name="Koo H.L."/>
            <person name="Moffat K.S."/>
            <person name="Cronin L.A."/>
            <person name="Shen M."/>
            <person name="Pai G."/>
            <person name="Van Aken S."/>
            <person name="Umayam L."/>
            <person name="Tallon L.J."/>
            <person name="Gill J.E."/>
            <person name="Adams M.D."/>
            <person name="Carrera A.J."/>
            <person name="Creasy T.H."/>
            <person name="Goodman H.M."/>
            <person name="Somerville C.R."/>
            <person name="Copenhaver G.P."/>
            <person name="Preuss D."/>
            <person name="Nierman W.C."/>
            <person name="White O."/>
            <person name="Eisen J.A."/>
            <person name="Salzberg S.L."/>
            <person name="Fraser C.M."/>
            <person name="Venter J.C."/>
        </authorList>
    </citation>
    <scope>NUCLEOTIDE SEQUENCE [LARGE SCALE GENOMIC DNA]</scope>
    <source>
        <strain>cv. Columbia</strain>
    </source>
</reference>
<reference key="2">
    <citation type="journal article" date="2017" name="Plant J.">
        <title>Araport11: a complete reannotation of the Arabidopsis thaliana reference genome.</title>
        <authorList>
            <person name="Cheng C.Y."/>
            <person name="Krishnakumar V."/>
            <person name="Chan A.P."/>
            <person name="Thibaud-Nissen F."/>
            <person name="Schobel S."/>
            <person name="Town C.D."/>
        </authorList>
    </citation>
    <scope>GENOME REANNOTATION</scope>
    <source>
        <strain>cv. Columbia</strain>
    </source>
</reference>
<reference key="3">
    <citation type="submission" date="2006-07" db="EMBL/GenBank/DDBJ databases">
        <title>Large-scale analysis of RIKEN Arabidopsis full-length (RAFL) cDNAs.</title>
        <authorList>
            <person name="Totoki Y."/>
            <person name="Seki M."/>
            <person name="Ishida J."/>
            <person name="Nakajima M."/>
            <person name="Enju A."/>
            <person name="Kamiya A."/>
            <person name="Narusaka M."/>
            <person name="Shin-i T."/>
            <person name="Nakagawa M."/>
            <person name="Sakamoto N."/>
            <person name="Oishi K."/>
            <person name="Kohara Y."/>
            <person name="Kobayashi M."/>
            <person name="Toyoda A."/>
            <person name="Sakaki Y."/>
            <person name="Sakurai T."/>
            <person name="Iida K."/>
            <person name="Akiyama K."/>
            <person name="Satou M."/>
            <person name="Toyoda T."/>
            <person name="Konagaya A."/>
            <person name="Carninci P."/>
            <person name="Kawai J."/>
            <person name="Hayashizaki Y."/>
            <person name="Shinozaki K."/>
        </authorList>
    </citation>
    <scope>NUCLEOTIDE SEQUENCE [LARGE SCALE MRNA] OF 148-783</scope>
    <source>
        <strain>cv. Columbia</strain>
    </source>
</reference>
<reference key="4">
    <citation type="journal article" date="2003" name="Mol. Cell. Proteomics">
        <title>Large-scale analysis of in vivo phosphorylated membrane proteins by immobilized metal ion affinity chromatography and mass spectrometry.</title>
        <authorList>
            <person name="Nuehse T.S."/>
            <person name="Stensballe A."/>
            <person name="Jensen O.N."/>
            <person name="Peck S.C."/>
        </authorList>
    </citation>
    <scope>PHOSPHORYLATION [LARGE SCALE ANALYSIS] AT SER-199</scope>
    <scope>IDENTIFICATION BY MASS SPECTROMETRY [LARGE SCALE ANALYSIS]</scope>
    <source>
        <strain>cv. La-0</strain>
    </source>
</reference>
<reference key="5">
    <citation type="journal article" date="2004" name="Plant Cell">
        <title>Phosphoproteomics of the Arabidopsis plasma membrane and a new phosphorylation site database.</title>
        <authorList>
            <person name="Nuehse T.S."/>
            <person name="Stensballe A."/>
            <person name="Jensen O.N."/>
            <person name="Peck S.C."/>
        </authorList>
    </citation>
    <scope>PHOSPHORYLATION [LARGE SCALE ANALYSIS] AT SER-199</scope>
    <scope>IDENTIFICATION BY MASS SPECTROMETRY [LARGE SCALE ANALYSIS]</scope>
</reference>
<reference key="6">
    <citation type="journal article" date="2005" name="Dev. Biol.">
        <title>POL and related phosphatases are dosage-sensitive regulators of meristem and organ development in Arabidopsis.</title>
        <authorList>
            <person name="Song S.-K."/>
            <person name="Clark S.E."/>
        </authorList>
    </citation>
    <scope>FUNCTION</scope>
    <scope>TISSUE SPECIFICITY</scope>
    <scope>GENE FAMILY</scope>
    <scope>NOMENCLATURE</scope>
</reference>
<reference key="7">
    <citation type="journal article" date="2006" name="Development">
        <title>POL and PLL1 phosphatases are CLAVATA1 signaling intermediates required for Arabidopsis shoot and floral stem cells.</title>
        <authorList>
            <person name="Song S.-K."/>
            <person name="Lee M.M."/>
            <person name="Clark S.E."/>
        </authorList>
    </citation>
    <scope>FUNCTION</scope>
    <scope>DISRUPTION PHENOTYPE</scope>
</reference>
<reference key="8">
    <citation type="journal article" date="2008" name="BMC Genomics">
        <title>Genome-wide and expression analysis of protein phosphatase 2C in rice and Arabidopsis.</title>
        <authorList>
            <person name="Xue T."/>
            <person name="Wang D."/>
            <person name="Zhang S."/>
            <person name="Ehlting J."/>
            <person name="Ni F."/>
            <person name="Jacab S."/>
            <person name="Zheng C."/>
            <person name="Zhong Y."/>
        </authorList>
    </citation>
    <scope>GENE FAMILY</scope>
    <scope>NOMENCLATURE</scope>
</reference>
<reference key="9">
    <citation type="journal article" date="2009" name="J. Proteomics">
        <title>Phosphoproteomic analysis of nuclei-enriched fractions from Arabidopsis thaliana.</title>
        <authorList>
            <person name="Jones A.M.E."/>
            <person name="MacLean D."/>
            <person name="Studholme D.J."/>
            <person name="Serna-Sanz A."/>
            <person name="Andreasson E."/>
            <person name="Rathjen J.P."/>
            <person name="Peck S.C."/>
        </authorList>
    </citation>
    <scope>IDENTIFICATION BY MASS SPECTROMETRY [LARGE SCALE ANALYSIS]</scope>
    <source>
        <strain>cv. Columbia</strain>
    </source>
</reference>
<accession>O82302</accession>
<accession>Q0WN23</accession>
<evidence type="ECO:0000250" key="1"/>
<evidence type="ECO:0000255" key="2">
    <source>
        <dbReference type="PROSITE-ProRule" id="PRU01082"/>
    </source>
</evidence>
<evidence type="ECO:0000256" key="3">
    <source>
        <dbReference type="SAM" id="MobiDB-lite"/>
    </source>
</evidence>
<evidence type="ECO:0000269" key="4">
    <source>
    </source>
</evidence>
<evidence type="ECO:0000269" key="5">
    <source>
    </source>
</evidence>
<evidence type="ECO:0000305" key="6"/>
<evidence type="ECO:0007744" key="7">
    <source>
    </source>
</evidence>
<evidence type="ECO:0007744" key="8">
    <source>
    </source>
</evidence>
<proteinExistence type="evidence at protein level"/>
<sequence length="783" mass="86523">MGSGFSSLLPCFNQGHRNRRRHSSAANPSHSDLIDSFREPLDETLGHSYCYVPSSSNRFISPFPSDRFVSPTASFRLSPPHEPGRIRGSGSSEQLHTGFRAISGASVSANTSNSKTVLQLEDIYDDATESSFGGGVRRSVVNANGFEGTSSFSALPLQPGPDRSGLFMSGPIERGATSGPLDPPAGEISRSNSAGVHFSAPLGGVYSKKRRKKKKKSLSWHPIFGGEKKQRPWVLPVSNFVVGAKKENIVRPDVEAMAASSGENDLQWALGKAGEDRVQLAVFEKQGWLFAGIYDGFNGPDAPEFLMANLYRAVHSELQGLFWELEEEDDNPTDISTRELEQQGEFEDHVNEMASSSCPATEKEEEEMGKRLTSSLEVVEVKERKRLWELLAEAQAEDALDLSGSDRFAFSVDDAIGAGNAVSVGSKRWLLLSKLKQGLSKQGISGRKLFPWKSGVEENETEEVDNVGVEEGVDKRRKRRKAGTVDHELVLKAMSNGLEATEQAFLEMTDKVLETNPELALMGSCLLVALMRDDDVYIMNIGDSRALVAQYQVEETGESVETAERVEERRNDLDRDDGNKEPLVVDSSDSTVNNEAPLPQTKLVALQLTTDHSTSIEDEVTRIKNEHPDDNHCIVNDRVKGRLKVTRAFGAGFLKQPKLNDALLEMFRNEYIGTDPYISCTPSLRHYRLTENDQFMVLSSDGLYQYLSNVEVVSLAMEKFPDGDPAQHVIQELLVRAAKKAGMDFHELLDIPQGDRRKYHDDCTVLVIALGGSRIWKSSGKYL</sequence>
<protein>
    <recommendedName>
        <fullName>Protein phosphatase 2C 29</fullName>
        <shortName>AtPP2C29</shortName>
        <ecNumber>3.1.3.16</ecNumber>
    </recommendedName>
    <alternativeName>
        <fullName>Protein POLTERGEIST-LIKE 1</fullName>
    </alternativeName>
    <alternativeName>
        <fullName>Protein phosphatase 2C PLL1</fullName>
        <shortName>PP2C PLL1</shortName>
    </alternativeName>
</protein>
<name>P2C29_ARATH</name>
<gene>
    <name type="primary">PLL1</name>
    <name type="ordered locus">At2g35350</name>
    <name type="ORF">T32F12.27</name>
</gene>
<comment type="function">
    <text evidence="4 5">Involved in the regulation of pedicel length and of CLAVATA pathways controlling stem cell identity at shoot and flower meristems.</text>
</comment>
<comment type="catalytic activity">
    <reaction>
        <text>O-phospho-L-seryl-[protein] + H2O = L-seryl-[protein] + phosphate</text>
        <dbReference type="Rhea" id="RHEA:20629"/>
        <dbReference type="Rhea" id="RHEA-COMP:9863"/>
        <dbReference type="Rhea" id="RHEA-COMP:11604"/>
        <dbReference type="ChEBI" id="CHEBI:15377"/>
        <dbReference type="ChEBI" id="CHEBI:29999"/>
        <dbReference type="ChEBI" id="CHEBI:43474"/>
        <dbReference type="ChEBI" id="CHEBI:83421"/>
        <dbReference type="EC" id="3.1.3.16"/>
    </reaction>
</comment>
<comment type="catalytic activity">
    <reaction>
        <text>O-phospho-L-threonyl-[protein] + H2O = L-threonyl-[protein] + phosphate</text>
        <dbReference type="Rhea" id="RHEA:47004"/>
        <dbReference type="Rhea" id="RHEA-COMP:11060"/>
        <dbReference type="Rhea" id="RHEA-COMP:11605"/>
        <dbReference type="ChEBI" id="CHEBI:15377"/>
        <dbReference type="ChEBI" id="CHEBI:30013"/>
        <dbReference type="ChEBI" id="CHEBI:43474"/>
        <dbReference type="ChEBI" id="CHEBI:61977"/>
        <dbReference type="EC" id="3.1.3.16"/>
    </reaction>
</comment>
<comment type="cofactor">
    <cofactor evidence="1">
        <name>Mg(2+)</name>
        <dbReference type="ChEBI" id="CHEBI:18420"/>
    </cofactor>
    <cofactor evidence="1">
        <name>Mn(2+)</name>
        <dbReference type="ChEBI" id="CHEBI:29035"/>
    </cofactor>
    <text evidence="1">Binds 2 magnesium or manganese ions per subunit.</text>
</comment>
<comment type="subcellular location">
    <subcellularLocation>
        <location evidence="6">Nucleus</location>
    </subcellularLocation>
</comment>
<comment type="tissue specificity">
    <text evidence="4">Expressed in roots, leaves, stems, inflorescences, flowers and developing vascular tissue.</text>
</comment>
<comment type="domain">
    <text>The conserved PP2C phosphatase domain (257-736) is interrupted by an insertion of approximately 200 amino acids.</text>
</comment>
<comment type="disruption phenotype">
    <text evidence="5">Loss-of-function mutant pll1-1 (T-DNA insertion) shows suppression of clavata mutant phenotypes. Redundant with POL. Pol and pll1 double mutant inis seedling lethal.</text>
</comment>
<comment type="similarity">
    <text evidence="6">Belongs to the PP2C family.</text>
</comment>
<comment type="sequence caution" evidence="6">
    <conflict type="erroneous gene model prediction">
        <sequence resource="EMBL-CDS" id="AAC36186"/>
    </conflict>
</comment>
<comment type="sequence caution" evidence="6">
    <conflict type="erroneous initiation">
        <sequence resource="EMBL-CDS" id="BAF01477"/>
    </conflict>
    <text>Truncated N-terminus.</text>
</comment>
<comment type="sequence caution" evidence="6">
    <conflict type="miscellaneous discrepancy">
        <sequence resource="EMBL-CDS" id="BAF01477"/>
    </conflict>
    <text>Intron retention.</text>
</comment>
<organism>
    <name type="scientific">Arabidopsis thaliana</name>
    <name type="common">Mouse-ear cress</name>
    <dbReference type="NCBI Taxonomy" id="3702"/>
    <lineage>
        <taxon>Eukaryota</taxon>
        <taxon>Viridiplantae</taxon>
        <taxon>Streptophyta</taxon>
        <taxon>Embryophyta</taxon>
        <taxon>Tracheophyta</taxon>
        <taxon>Spermatophyta</taxon>
        <taxon>Magnoliopsida</taxon>
        <taxon>eudicotyledons</taxon>
        <taxon>Gunneridae</taxon>
        <taxon>Pentapetalae</taxon>
        <taxon>rosids</taxon>
        <taxon>malvids</taxon>
        <taxon>Brassicales</taxon>
        <taxon>Brassicaceae</taxon>
        <taxon>Camelineae</taxon>
        <taxon>Arabidopsis</taxon>
    </lineage>
</organism>
<keyword id="KW-0217">Developmental protein</keyword>
<keyword id="KW-0378">Hydrolase</keyword>
<keyword id="KW-0460">Magnesium</keyword>
<keyword id="KW-0464">Manganese</keyword>
<keyword id="KW-0479">Metal-binding</keyword>
<keyword id="KW-0539">Nucleus</keyword>
<keyword id="KW-0597">Phosphoprotein</keyword>
<keyword id="KW-0904">Protein phosphatase</keyword>
<keyword id="KW-1185">Reference proteome</keyword>
<dbReference type="EC" id="3.1.3.16"/>
<dbReference type="EMBL" id="AC005314">
    <property type="protein sequence ID" value="AAC36186.1"/>
    <property type="status" value="ALT_SEQ"/>
    <property type="molecule type" value="Genomic_DNA"/>
</dbReference>
<dbReference type="EMBL" id="CP002685">
    <property type="protein sequence ID" value="AEC09098.1"/>
    <property type="molecule type" value="Genomic_DNA"/>
</dbReference>
<dbReference type="EMBL" id="AK229632">
    <property type="protein sequence ID" value="BAF01477.1"/>
    <property type="status" value="ALT_SEQ"/>
    <property type="molecule type" value="mRNA"/>
</dbReference>
<dbReference type="PIR" id="E84767">
    <property type="entry name" value="E84767"/>
</dbReference>
<dbReference type="RefSeq" id="NP_181078.2">
    <property type="nucleotide sequence ID" value="NM_129087.3"/>
</dbReference>
<dbReference type="SMR" id="O82302"/>
<dbReference type="FunCoup" id="O82302">
    <property type="interactions" value="278"/>
</dbReference>
<dbReference type="STRING" id="3702.O82302"/>
<dbReference type="iPTMnet" id="O82302"/>
<dbReference type="PaxDb" id="3702-AT2G35350.1"/>
<dbReference type="ProteomicsDB" id="248796"/>
<dbReference type="EnsemblPlants" id="AT2G35350.1">
    <property type="protein sequence ID" value="AT2G35350.1"/>
    <property type="gene ID" value="AT2G35350"/>
</dbReference>
<dbReference type="GeneID" id="818102"/>
<dbReference type="Gramene" id="AT2G35350.1">
    <property type="protein sequence ID" value="AT2G35350.1"/>
    <property type="gene ID" value="AT2G35350"/>
</dbReference>
<dbReference type="KEGG" id="ath:AT2G35350"/>
<dbReference type="Araport" id="AT2G35350"/>
<dbReference type="TAIR" id="AT2G35350">
    <property type="gene designation" value="PLL1"/>
</dbReference>
<dbReference type="eggNOG" id="KOG0700">
    <property type="taxonomic scope" value="Eukaryota"/>
</dbReference>
<dbReference type="HOGENOM" id="CLU_013173_12_1_1"/>
<dbReference type="InParanoid" id="O82302"/>
<dbReference type="OMA" id="EDGVQWA"/>
<dbReference type="OrthoDB" id="420076at2759"/>
<dbReference type="PhylomeDB" id="O82302"/>
<dbReference type="PRO" id="PR:O82302"/>
<dbReference type="Proteomes" id="UP000006548">
    <property type="component" value="Chromosome 2"/>
</dbReference>
<dbReference type="ExpressionAtlas" id="O82302">
    <property type="expression patterns" value="baseline and differential"/>
</dbReference>
<dbReference type="GO" id="GO:0005634">
    <property type="term" value="C:nucleus"/>
    <property type="evidence" value="ECO:0007669"/>
    <property type="project" value="UniProtKB-SubCell"/>
</dbReference>
<dbReference type="GO" id="GO:0005886">
    <property type="term" value="C:plasma membrane"/>
    <property type="evidence" value="ECO:0000314"/>
    <property type="project" value="TAIR"/>
</dbReference>
<dbReference type="GO" id="GO:0046872">
    <property type="term" value="F:metal ion binding"/>
    <property type="evidence" value="ECO:0007669"/>
    <property type="project" value="UniProtKB-KW"/>
</dbReference>
<dbReference type="GO" id="GO:0005543">
    <property type="term" value="F:phospholipid binding"/>
    <property type="evidence" value="ECO:0000314"/>
    <property type="project" value="TAIR"/>
</dbReference>
<dbReference type="GO" id="GO:0004722">
    <property type="term" value="F:protein serine/threonine phosphatase activity"/>
    <property type="evidence" value="ECO:0007669"/>
    <property type="project" value="UniProtKB-EC"/>
</dbReference>
<dbReference type="GO" id="GO:0010074">
    <property type="term" value="P:maintenance of meristem identity"/>
    <property type="evidence" value="ECO:0000316"/>
    <property type="project" value="TAIR"/>
</dbReference>
<dbReference type="GO" id="GO:0009933">
    <property type="term" value="P:meristem structural organization"/>
    <property type="evidence" value="ECO:0000316"/>
    <property type="project" value="TAIR"/>
</dbReference>
<dbReference type="GO" id="GO:0006355">
    <property type="term" value="P:regulation of DNA-templated transcription"/>
    <property type="evidence" value="ECO:0000316"/>
    <property type="project" value="TAIR"/>
</dbReference>
<dbReference type="GO" id="GO:0009826">
    <property type="term" value="P:unidimensional cell growth"/>
    <property type="evidence" value="ECO:0000316"/>
    <property type="project" value="TAIR"/>
</dbReference>
<dbReference type="CDD" id="cd00143">
    <property type="entry name" value="PP2Cc"/>
    <property type="match status" value="1"/>
</dbReference>
<dbReference type="Gene3D" id="3.60.40.10">
    <property type="entry name" value="PPM-type phosphatase domain"/>
    <property type="match status" value="1"/>
</dbReference>
<dbReference type="InterPro" id="IPR015655">
    <property type="entry name" value="PP2C"/>
</dbReference>
<dbReference type="InterPro" id="IPR036457">
    <property type="entry name" value="PPM-type-like_dom_sf"/>
</dbReference>
<dbReference type="InterPro" id="IPR001932">
    <property type="entry name" value="PPM-type_phosphatase-like_dom"/>
</dbReference>
<dbReference type="PANTHER" id="PTHR13832">
    <property type="entry name" value="PROTEIN PHOSPHATASE 2C"/>
    <property type="match status" value="1"/>
</dbReference>
<dbReference type="PANTHER" id="PTHR13832:SF301">
    <property type="entry name" value="PROTEIN PHOSPHATASE 2C 29"/>
    <property type="match status" value="1"/>
</dbReference>
<dbReference type="Pfam" id="PF00481">
    <property type="entry name" value="PP2C"/>
    <property type="match status" value="2"/>
</dbReference>
<dbReference type="SMART" id="SM00332">
    <property type="entry name" value="PP2Cc"/>
    <property type="match status" value="1"/>
</dbReference>
<dbReference type="SUPFAM" id="SSF81606">
    <property type="entry name" value="PP2C-like"/>
    <property type="match status" value="1"/>
</dbReference>
<dbReference type="PROSITE" id="PS51746">
    <property type="entry name" value="PPM_2"/>
    <property type="match status" value="1"/>
</dbReference>
<feature type="chain" id="PRO_0000301259" description="Protein phosphatase 2C 29">
    <location>
        <begin position="1"/>
        <end position="783"/>
    </location>
</feature>
<feature type="domain" description="PPM-type phosphatase" evidence="2">
    <location>
        <begin position="260"/>
        <end position="770"/>
    </location>
</feature>
<feature type="region of interest" description="Disordered" evidence="3">
    <location>
        <begin position="151"/>
        <end position="194"/>
    </location>
</feature>
<feature type="region of interest" description="Disordered" evidence="3">
    <location>
        <begin position="555"/>
        <end position="595"/>
    </location>
</feature>
<feature type="compositionally biased region" description="Basic and acidic residues" evidence="3">
    <location>
        <begin position="562"/>
        <end position="580"/>
    </location>
</feature>
<feature type="binding site" evidence="1">
    <location>
        <position position="295"/>
    </location>
    <ligand>
        <name>Mn(2+)</name>
        <dbReference type="ChEBI" id="CHEBI:29035"/>
        <label>1</label>
    </ligand>
</feature>
<feature type="binding site" evidence="1">
    <location>
        <position position="295"/>
    </location>
    <ligand>
        <name>Mn(2+)</name>
        <dbReference type="ChEBI" id="CHEBI:29035"/>
        <label>2</label>
    </ligand>
</feature>
<feature type="binding site" evidence="1">
    <location>
        <position position="296"/>
    </location>
    <ligand>
        <name>Mn(2+)</name>
        <dbReference type="ChEBI" id="CHEBI:29035"/>
        <label>1</label>
    </ligand>
</feature>
<feature type="binding site" evidence="1">
    <location>
        <position position="701"/>
    </location>
    <ligand>
        <name>Mn(2+)</name>
        <dbReference type="ChEBI" id="CHEBI:29035"/>
        <label>2</label>
    </ligand>
</feature>
<feature type="binding site" evidence="1">
    <location>
        <position position="761"/>
    </location>
    <ligand>
        <name>Mn(2+)</name>
        <dbReference type="ChEBI" id="CHEBI:29035"/>
        <label>2</label>
    </ligand>
</feature>
<feature type="modified residue" description="Phosphoserine" evidence="7 8">
    <location>
        <position position="199"/>
    </location>
</feature>